<keyword id="KW-1185">Reference proteome</keyword>
<gene>
    <name type="ordered locus">MPN_040</name>
    <name type="ORF">B01_orf103b</name>
    <name type="ORF">MP114</name>
</gene>
<sequence length="103" mass="11291">MSSVFSKPNLKRPSFDVKNLTKPSRLLSATLRSSCAFLSSASFFACSLCFFCCSSISFCSLASSSARLRYSSSHSFFCWVLFSRSGLAYSSSNLSSKSSRLRS</sequence>
<reference key="1">
    <citation type="journal article" date="1996" name="Nucleic Acids Res.">
        <title>Complete sequence analysis of the genome of the bacterium Mycoplasma pneumoniae.</title>
        <authorList>
            <person name="Himmelreich R."/>
            <person name="Hilbert H."/>
            <person name="Plagens H."/>
            <person name="Pirkl E."/>
            <person name="Li B.-C."/>
            <person name="Herrmann R."/>
        </authorList>
    </citation>
    <scope>NUCLEOTIDE SEQUENCE [LARGE SCALE GENOMIC DNA]</scope>
    <source>
        <strain>ATCC 29342 / M129 / Subtype 1</strain>
    </source>
</reference>
<feature type="chain" id="PRO_0000210635" description="Uncharacterized protein MPN_040">
    <location>
        <begin position="1"/>
        <end position="103"/>
    </location>
</feature>
<dbReference type="EMBL" id="U00089">
    <property type="protein sequence ID" value="AAB95762.1"/>
    <property type="molecule type" value="Genomic_DNA"/>
</dbReference>
<dbReference type="PIR" id="S73440">
    <property type="entry name" value="S73440"/>
</dbReference>
<dbReference type="IntAct" id="P75074">
    <property type="interactions" value="2"/>
</dbReference>
<dbReference type="EnsemblBacteria" id="AAB95762">
    <property type="protein sequence ID" value="AAB95762"/>
    <property type="gene ID" value="MPN_040"/>
</dbReference>
<dbReference type="KEGG" id="mpn:MPN_040"/>
<dbReference type="HOGENOM" id="CLU_2260656_0_0_14"/>
<dbReference type="Proteomes" id="UP000000808">
    <property type="component" value="Chromosome"/>
</dbReference>
<name>Y040_MYCPN</name>
<protein>
    <recommendedName>
        <fullName>Uncharacterized protein MPN_040</fullName>
    </recommendedName>
</protein>
<organism>
    <name type="scientific">Mycoplasma pneumoniae (strain ATCC 29342 / M129 / Subtype 1)</name>
    <name type="common">Mycoplasmoides pneumoniae</name>
    <dbReference type="NCBI Taxonomy" id="272634"/>
    <lineage>
        <taxon>Bacteria</taxon>
        <taxon>Bacillati</taxon>
        <taxon>Mycoplasmatota</taxon>
        <taxon>Mycoplasmoidales</taxon>
        <taxon>Mycoplasmoidaceae</taxon>
        <taxon>Mycoplasmoides</taxon>
    </lineage>
</organism>
<proteinExistence type="predicted"/>
<accession>P75074</accession>